<reference key="1">
    <citation type="journal article" date="2003" name="Science">
        <title>Role of mobile DNA in the evolution of vancomycin-resistant Enterococcus faecalis.</title>
        <authorList>
            <person name="Paulsen I.T."/>
            <person name="Banerjei L."/>
            <person name="Myers G.S.A."/>
            <person name="Nelson K.E."/>
            <person name="Seshadri R."/>
            <person name="Read T.D."/>
            <person name="Fouts D.E."/>
            <person name="Eisen J.A."/>
            <person name="Gill S.R."/>
            <person name="Heidelberg J.F."/>
            <person name="Tettelin H."/>
            <person name="Dodson R.J."/>
            <person name="Umayam L.A."/>
            <person name="Brinkac L.M."/>
            <person name="Beanan M.J."/>
            <person name="Daugherty S.C."/>
            <person name="DeBoy R.T."/>
            <person name="Durkin S.A."/>
            <person name="Kolonay J.F."/>
            <person name="Madupu R."/>
            <person name="Nelson W.C."/>
            <person name="Vamathevan J.J."/>
            <person name="Tran B."/>
            <person name="Upton J."/>
            <person name="Hansen T."/>
            <person name="Shetty J."/>
            <person name="Khouri H.M."/>
            <person name="Utterback T.R."/>
            <person name="Radune D."/>
            <person name="Ketchum K.A."/>
            <person name="Dougherty B.A."/>
            <person name="Fraser C.M."/>
        </authorList>
    </citation>
    <scope>NUCLEOTIDE SEQUENCE [LARGE SCALE GENOMIC DNA]</scope>
    <source>
        <strain>ATCC 700802 / V583</strain>
    </source>
</reference>
<accession>Q839G8</accession>
<dbReference type="EC" id="3.6.5.3" evidence="2"/>
<dbReference type="EMBL" id="AE016830">
    <property type="protein sequence ID" value="AAO80071.1"/>
    <property type="molecule type" value="Genomic_DNA"/>
</dbReference>
<dbReference type="RefSeq" id="NP_814000.1">
    <property type="nucleotide sequence ID" value="NC_004668.1"/>
</dbReference>
<dbReference type="RefSeq" id="WP_002356194.1">
    <property type="nucleotide sequence ID" value="NZ_KE136524.1"/>
</dbReference>
<dbReference type="SMR" id="Q839G8"/>
<dbReference type="STRING" id="226185.EF_0201"/>
<dbReference type="EnsemblBacteria" id="AAO80071">
    <property type="protein sequence ID" value="AAO80071"/>
    <property type="gene ID" value="EF_0201"/>
</dbReference>
<dbReference type="GeneID" id="60892697"/>
<dbReference type="KEGG" id="efa:EF0201"/>
<dbReference type="PATRIC" id="fig|226185.45.peg.65"/>
<dbReference type="eggNOG" id="COG0050">
    <property type="taxonomic scope" value="Bacteria"/>
</dbReference>
<dbReference type="HOGENOM" id="CLU_007265_0_1_9"/>
<dbReference type="Proteomes" id="UP000001415">
    <property type="component" value="Chromosome"/>
</dbReference>
<dbReference type="GO" id="GO:0005829">
    <property type="term" value="C:cytosol"/>
    <property type="evidence" value="ECO:0007669"/>
    <property type="project" value="TreeGrafter"/>
</dbReference>
<dbReference type="GO" id="GO:0005525">
    <property type="term" value="F:GTP binding"/>
    <property type="evidence" value="ECO:0007669"/>
    <property type="project" value="UniProtKB-UniRule"/>
</dbReference>
<dbReference type="GO" id="GO:0003924">
    <property type="term" value="F:GTPase activity"/>
    <property type="evidence" value="ECO:0007669"/>
    <property type="project" value="InterPro"/>
</dbReference>
<dbReference type="GO" id="GO:0003746">
    <property type="term" value="F:translation elongation factor activity"/>
    <property type="evidence" value="ECO:0007669"/>
    <property type="project" value="UniProtKB-UniRule"/>
</dbReference>
<dbReference type="CDD" id="cd01884">
    <property type="entry name" value="EF_Tu"/>
    <property type="match status" value="1"/>
</dbReference>
<dbReference type="CDD" id="cd03697">
    <property type="entry name" value="EFTU_II"/>
    <property type="match status" value="1"/>
</dbReference>
<dbReference type="CDD" id="cd03707">
    <property type="entry name" value="EFTU_III"/>
    <property type="match status" value="1"/>
</dbReference>
<dbReference type="FunFam" id="2.40.30.10:FF:000001">
    <property type="entry name" value="Elongation factor Tu"/>
    <property type="match status" value="1"/>
</dbReference>
<dbReference type="FunFam" id="3.40.50.300:FF:000003">
    <property type="entry name" value="Elongation factor Tu"/>
    <property type="match status" value="1"/>
</dbReference>
<dbReference type="Gene3D" id="3.40.50.300">
    <property type="entry name" value="P-loop containing nucleotide triphosphate hydrolases"/>
    <property type="match status" value="1"/>
</dbReference>
<dbReference type="Gene3D" id="2.40.30.10">
    <property type="entry name" value="Translation factors"/>
    <property type="match status" value="2"/>
</dbReference>
<dbReference type="HAMAP" id="MF_00118_B">
    <property type="entry name" value="EF_Tu_B"/>
    <property type="match status" value="1"/>
</dbReference>
<dbReference type="InterPro" id="IPR041709">
    <property type="entry name" value="EF-Tu_GTP-bd"/>
</dbReference>
<dbReference type="InterPro" id="IPR050055">
    <property type="entry name" value="EF-Tu_GTPase"/>
</dbReference>
<dbReference type="InterPro" id="IPR004161">
    <property type="entry name" value="EFTu-like_2"/>
</dbReference>
<dbReference type="InterPro" id="IPR033720">
    <property type="entry name" value="EFTU_2"/>
</dbReference>
<dbReference type="InterPro" id="IPR031157">
    <property type="entry name" value="G_TR_CS"/>
</dbReference>
<dbReference type="InterPro" id="IPR027417">
    <property type="entry name" value="P-loop_NTPase"/>
</dbReference>
<dbReference type="InterPro" id="IPR005225">
    <property type="entry name" value="Small_GTP-bd"/>
</dbReference>
<dbReference type="InterPro" id="IPR000795">
    <property type="entry name" value="T_Tr_GTP-bd_dom"/>
</dbReference>
<dbReference type="InterPro" id="IPR009000">
    <property type="entry name" value="Transl_B-barrel_sf"/>
</dbReference>
<dbReference type="InterPro" id="IPR009001">
    <property type="entry name" value="Transl_elong_EF1A/Init_IF2_C"/>
</dbReference>
<dbReference type="InterPro" id="IPR004541">
    <property type="entry name" value="Transl_elong_EFTu/EF1A_bac/org"/>
</dbReference>
<dbReference type="InterPro" id="IPR004160">
    <property type="entry name" value="Transl_elong_EFTu/EF1A_C"/>
</dbReference>
<dbReference type="NCBIfam" id="TIGR00485">
    <property type="entry name" value="EF-Tu"/>
    <property type="match status" value="1"/>
</dbReference>
<dbReference type="NCBIfam" id="NF000766">
    <property type="entry name" value="PRK00049.1"/>
    <property type="match status" value="1"/>
</dbReference>
<dbReference type="NCBIfam" id="NF009372">
    <property type="entry name" value="PRK12735.1"/>
    <property type="match status" value="1"/>
</dbReference>
<dbReference type="NCBIfam" id="NF009373">
    <property type="entry name" value="PRK12736.1"/>
    <property type="match status" value="1"/>
</dbReference>
<dbReference type="NCBIfam" id="TIGR00231">
    <property type="entry name" value="small_GTP"/>
    <property type="match status" value="1"/>
</dbReference>
<dbReference type="PANTHER" id="PTHR43721:SF22">
    <property type="entry name" value="ELONGATION FACTOR TU, MITOCHONDRIAL"/>
    <property type="match status" value="1"/>
</dbReference>
<dbReference type="PANTHER" id="PTHR43721">
    <property type="entry name" value="ELONGATION FACTOR TU-RELATED"/>
    <property type="match status" value="1"/>
</dbReference>
<dbReference type="Pfam" id="PF00009">
    <property type="entry name" value="GTP_EFTU"/>
    <property type="match status" value="1"/>
</dbReference>
<dbReference type="Pfam" id="PF03144">
    <property type="entry name" value="GTP_EFTU_D2"/>
    <property type="match status" value="1"/>
</dbReference>
<dbReference type="Pfam" id="PF03143">
    <property type="entry name" value="GTP_EFTU_D3"/>
    <property type="match status" value="1"/>
</dbReference>
<dbReference type="PRINTS" id="PR00315">
    <property type="entry name" value="ELONGATNFCT"/>
</dbReference>
<dbReference type="SUPFAM" id="SSF50465">
    <property type="entry name" value="EF-Tu/eEF-1alpha/eIF2-gamma C-terminal domain"/>
    <property type="match status" value="1"/>
</dbReference>
<dbReference type="SUPFAM" id="SSF52540">
    <property type="entry name" value="P-loop containing nucleoside triphosphate hydrolases"/>
    <property type="match status" value="1"/>
</dbReference>
<dbReference type="SUPFAM" id="SSF50447">
    <property type="entry name" value="Translation proteins"/>
    <property type="match status" value="1"/>
</dbReference>
<dbReference type="PROSITE" id="PS00301">
    <property type="entry name" value="G_TR_1"/>
    <property type="match status" value="1"/>
</dbReference>
<dbReference type="PROSITE" id="PS51722">
    <property type="entry name" value="G_TR_2"/>
    <property type="match status" value="1"/>
</dbReference>
<feature type="chain" id="PRO_1000015654" description="Elongation factor Tu">
    <location>
        <begin position="1"/>
        <end position="395"/>
    </location>
</feature>
<feature type="domain" description="tr-type G">
    <location>
        <begin position="10"/>
        <end position="204"/>
    </location>
</feature>
<feature type="region of interest" description="G1" evidence="1">
    <location>
        <begin position="19"/>
        <end position="26"/>
    </location>
</feature>
<feature type="region of interest" description="G2" evidence="1">
    <location>
        <begin position="60"/>
        <end position="64"/>
    </location>
</feature>
<feature type="region of interest" description="G3" evidence="1">
    <location>
        <begin position="81"/>
        <end position="84"/>
    </location>
</feature>
<feature type="region of interest" description="G4" evidence="1">
    <location>
        <begin position="136"/>
        <end position="139"/>
    </location>
</feature>
<feature type="region of interest" description="G5" evidence="1">
    <location>
        <begin position="174"/>
        <end position="176"/>
    </location>
</feature>
<feature type="binding site" evidence="2">
    <location>
        <begin position="19"/>
        <end position="26"/>
    </location>
    <ligand>
        <name>GTP</name>
        <dbReference type="ChEBI" id="CHEBI:37565"/>
    </ligand>
</feature>
<feature type="binding site" evidence="2">
    <location>
        <position position="26"/>
    </location>
    <ligand>
        <name>Mg(2+)</name>
        <dbReference type="ChEBI" id="CHEBI:18420"/>
    </ligand>
</feature>
<feature type="binding site" evidence="2">
    <location>
        <begin position="81"/>
        <end position="85"/>
    </location>
    <ligand>
        <name>GTP</name>
        <dbReference type="ChEBI" id="CHEBI:37565"/>
    </ligand>
</feature>
<feature type="binding site" evidence="2">
    <location>
        <begin position="136"/>
        <end position="139"/>
    </location>
    <ligand>
        <name>GTP</name>
        <dbReference type="ChEBI" id="CHEBI:37565"/>
    </ligand>
</feature>
<evidence type="ECO:0000250" key="1"/>
<evidence type="ECO:0000255" key="2">
    <source>
        <dbReference type="HAMAP-Rule" id="MF_00118"/>
    </source>
</evidence>
<protein>
    <recommendedName>
        <fullName evidence="2">Elongation factor Tu</fullName>
        <shortName evidence="2">EF-Tu</shortName>
        <ecNumber evidence="2">3.6.5.3</ecNumber>
    </recommendedName>
</protein>
<proteinExistence type="inferred from homology"/>
<gene>
    <name evidence="2" type="primary">tuf</name>
    <name type="ordered locus">EF_0201</name>
</gene>
<organism>
    <name type="scientific">Enterococcus faecalis (strain ATCC 700802 / V583)</name>
    <dbReference type="NCBI Taxonomy" id="226185"/>
    <lineage>
        <taxon>Bacteria</taxon>
        <taxon>Bacillati</taxon>
        <taxon>Bacillota</taxon>
        <taxon>Bacilli</taxon>
        <taxon>Lactobacillales</taxon>
        <taxon>Enterococcaceae</taxon>
        <taxon>Enterococcus</taxon>
    </lineage>
</organism>
<comment type="function">
    <text evidence="2">GTP hydrolase that promotes the GTP-dependent binding of aminoacyl-tRNA to the A-site of ribosomes during protein biosynthesis.</text>
</comment>
<comment type="catalytic activity">
    <reaction evidence="2">
        <text>GTP + H2O = GDP + phosphate + H(+)</text>
        <dbReference type="Rhea" id="RHEA:19669"/>
        <dbReference type="ChEBI" id="CHEBI:15377"/>
        <dbReference type="ChEBI" id="CHEBI:15378"/>
        <dbReference type="ChEBI" id="CHEBI:37565"/>
        <dbReference type="ChEBI" id="CHEBI:43474"/>
        <dbReference type="ChEBI" id="CHEBI:58189"/>
        <dbReference type="EC" id="3.6.5.3"/>
    </reaction>
    <physiologicalReaction direction="left-to-right" evidence="2">
        <dbReference type="Rhea" id="RHEA:19670"/>
    </physiologicalReaction>
</comment>
<comment type="subunit">
    <text evidence="2">Monomer.</text>
</comment>
<comment type="subcellular location">
    <subcellularLocation>
        <location evidence="2">Cytoplasm</location>
    </subcellularLocation>
</comment>
<comment type="similarity">
    <text evidence="2">Belongs to the TRAFAC class translation factor GTPase superfamily. Classic translation factor GTPase family. EF-Tu/EF-1A subfamily.</text>
</comment>
<name>EFTU_ENTFA</name>
<sequence>MAKEKFDRSKSHVNIGTIGHVDHGKTTLTAAIATVLSKHGGGEAQSYDSIDNAPEEKERGITINTSHIEYETETRHYAHVDCPGHADYVKNMITGAAQMDGAILVVSAADGPMPQTREHILLSRNVGVPYIVVFLNKMDMVDDEELLELVEMEVRDLLSEYDFPGDDVPVIAGSALKALEGDESYEEKILELMAAVDEYIPTPERDTDKPFMMPVEDVFSITGRGTVATGRVERGEVRVGDEVEIVGIKDETSKTTVTGVEMFRKLLDYAEAGDNIGALLRGVAREDIERGQVLAKPATITPHTKFKAEVYVLSKEEGGRHTPFFTNYRPQFYFRTTDVTGVVELPEGTEMVMPGDNVAMDVELIHPIAIEDGTRFSIREGGRTVGSGVVTEIVK</sequence>
<keyword id="KW-0963">Cytoplasm</keyword>
<keyword id="KW-0251">Elongation factor</keyword>
<keyword id="KW-0342">GTP-binding</keyword>
<keyword id="KW-0378">Hydrolase</keyword>
<keyword id="KW-0460">Magnesium</keyword>
<keyword id="KW-0479">Metal-binding</keyword>
<keyword id="KW-0547">Nucleotide-binding</keyword>
<keyword id="KW-0648">Protein biosynthesis</keyword>
<keyword id="KW-1185">Reference proteome</keyword>